<dbReference type="EC" id="2.3.1.225"/>
<dbReference type="EMBL" id="CP017623">
    <property type="protein sequence ID" value="AOW26929.1"/>
    <property type="molecule type" value="Genomic_DNA"/>
</dbReference>
<dbReference type="RefSeq" id="XP_722161.1">
    <property type="nucleotide sequence ID" value="XM_717068.2"/>
</dbReference>
<dbReference type="SMR" id="Q5AL27"/>
<dbReference type="FunCoup" id="Q5AL27">
    <property type="interactions" value="646"/>
</dbReference>
<dbReference type="STRING" id="237561.Q5AL27"/>
<dbReference type="EnsemblFungi" id="C1_13220C_A-T">
    <property type="protein sequence ID" value="C1_13220C_A-T-p1"/>
    <property type="gene ID" value="C1_13220C_A"/>
</dbReference>
<dbReference type="GeneID" id="3636166"/>
<dbReference type="KEGG" id="cal:CAALFM_C113220CA"/>
<dbReference type="CGD" id="CAL0000187472">
    <property type="gene designation" value="AKR1"/>
</dbReference>
<dbReference type="VEuPathDB" id="FungiDB:C1_13220C_A"/>
<dbReference type="eggNOG" id="KOG0509">
    <property type="taxonomic scope" value="Eukaryota"/>
</dbReference>
<dbReference type="HOGENOM" id="CLU_012510_1_1_1"/>
<dbReference type="InParanoid" id="Q5AL27"/>
<dbReference type="OMA" id="FWVGFRY"/>
<dbReference type="OrthoDB" id="6781668at2759"/>
<dbReference type="PRO" id="PR:Q5AL27"/>
<dbReference type="Proteomes" id="UP000000559">
    <property type="component" value="Chromosome 1"/>
</dbReference>
<dbReference type="GO" id="GO:0031901">
    <property type="term" value="C:early endosome membrane"/>
    <property type="evidence" value="ECO:0007669"/>
    <property type="project" value="UniProtKB-SubCell"/>
</dbReference>
<dbReference type="GO" id="GO:0000139">
    <property type="term" value="C:Golgi membrane"/>
    <property type="evidence" value="ECO:0007669"/>
    <property type="project" value="UniProtKB-SubCell"/>
</dbReference>
<dbReference type="GO" id="GO:0019706">
    <property type="term" value="F:protein-cysteine S-palmitoyltransferase activity"/>
    <property type="evidence" value="ECO:0007669"/>
    <property type="project" value="UniProtKB-EC"/>
</dbReference>
<dbReference type="Gene3D" id="1.25.40.20">
    <property type="entry name" value="Ankyrin repeat-containing domain"/>
    <property type="match status" value="1"/>
</dbReference>
<dbReference type="InterPro" id="IPR002110">
    <property type="entry name" value="Ankyrin_rpt"/>
</dbReference>
<dbReference type="InterPro" id="IPR036770">
    <property type="entry name" value="Ankyrin_rpt-contain_sf"/>
</dbReference>
<dbReference type="InterPro" id="IPR001594">
    <property type="entry name" value="Palmitoyltrfase_DHHC"/>
</dbReference>
<dbReference type="PANTHER" id="PTHR24161">
    <property type="entry name" value="ANK_REP_REGION DOMAIN-CONTAINING PROTEIN-RELATED"/>
    <property type="match status" value="1"/>
</dbReference>
<dbReference type="PANTHER" id="PTHR24161:SF85">
    <property type="entry name" value="PALMITOYLTRANSFERASE HIP14"/>
    <property type="match status" value="1"/>
</dbReference>
<dbReference type="Pfam" id="PF12796">
    <property type="entry name" value="Ank_2"/>
    <property type="match status" value="2"/>
</dbReference>
<dbReference type="Pfam" id="PF01529">
    <property type="entry name" value="DHHC"/>
    <property type="match status" value="1"/>
</dbReference>
<dbReference type="SMART" id="SM00248">
    <property type="entry name" value="ANK"/>
    <property type="match status" value="6"/>
</dbReference>
<dbReference type="SUPFAM" id="SSF48403">
    <property type="entry name" value="Ankyrin repeat"/>
    <property type="match status" value="1"/>
</dbReference>
<dbReference type="PROSITE" id="PS50297">
    <property type="entry name" value="ANK_REP_REGION"/>
    <property type="match status" value="1"/>
</dbReference>
<dbReference type="PROSITE" id="PS50088">
    <property type="entry name" value="ANK_REPEAT"/>
    <property type="match status" value="3"/>
</dbReference>
<dbReference type="PROSITE" id="PS50216">
    <property type="entry name" value="DHHC"/>
    <property type="match status" value="1"/>
</dbReference>
<name>AKR1_CANAL</name>
<comment type="function">
    <text evidence="1">Palmitoyltransferase specific for casein kinase 1.</text>
</comment>
<comment type="catalytic activity">
    <reaction>
        <text>L-cysteinyl-[protein] + hexadecanoyl-CoA = S-hexadecanoyl-L-cysteinyl-[protein] + CoA</text>
        <dbReference type="Rhea" id="RHEA:36683"/>
        <dbReference type="Rhea" id="RHEA-COMP:10131"/>
        <dbReference type="Rhea" id="RHEA-COMP:11032"/>
        <dbReference type="ChEBI" id="CHEBI:29950"/>
        <dbReference type="ChEBI" id="CHEBI:57287"/>
        <dbReference type="ChEBI" id="CHEBI:57379"/>
        <dbReference type="ChEBI" id="CHEBI:74151"/>
        <dbReference type="EC" id="2.3.1.225"/>
    </reaction>
</comment>
<comment type="subcellular location">
    <subcellularLocation>
        <location>Early endosome membrane</location>
        <topology>Multi-pass membrane protein</topology>
    </subcellularLocation>
    <subcellularLocation>
        <location evidence="1">Golgi apparatus membrane</location>
        <topology evidence="1">Multi-pass membrane protein</topology>
    </subcellularLocation>
</comment>
<comment type="domain">
    <text evidence="1">The DHHC domain is required for palmitoyltransferase activity.</text>
</comment>
<comment type="similarity">
    <text evidence="5">Belongs to the DHHC palmitoyltransferase family. AKR/ZDHHC17 subfamily.</text>
</comment>
<evidence type="ECO:0000250" key="1"/>
<evidence type="ECO:0000255" key="2"/>
<evidence type="ECO:0000255" key="3">
    <source>
        <dbReference type="PROSITE-ProRule" id="PRU00067"/>
    </source>
</evidence>
<evidence type="ECO:0000256" key="4">
    <source>
        <dbReference type="SAM" id="MobiDB-lite"/>
    </source>
</evidence>
<evidence type="ECO:0000305" key="5"/>
<gene>
    <name type="primary">AKR1</name>
    <name type="ordered locus">CAALFM_C113220CA</name>
    <name type="ORF">CaO19.12414</name>
    <name type="ORF">CaO19.4950</name>
</gene>
<feature type="chain" id="PRO_0000212919" description="Palmitoyltransferase AKR1">
    <location>
        <begin position="1"/>
        <end position="813"/>
    </location>
</feature>
<feature type="topological domain" description="Cytoplasmic" evidence="2">
    <location>
        <begin position="1"/>
        <end position="387"/>
    </location>
</feature>
<feature type="transmembrane region" description="Helical" evidence="2">
    <location>
        <begin position="388"/>
        <end position="408"/>
    </location>
</feature>
<feature type="topological domain" description="Lumenal" evidence="2">
    <location>
        <begin position="409"/>
        <end position="412"/>
    </location>
</feature>
<feature type="transmembrane region" description="Helical" evidence="2">
    <location>
        <begin position="413"/>
        <end position="433"/>
    </location>
</feature>
<feature type="topological domain" description="Cytoplasmic" evidence="2">
    <location>
        <begin position="434"/>
        <end position="452"/>
    </location>
</feature>
<feature type="transmembrane region" description="Helical" evidence="2">
    <location>
        <begin position="453"/>
        <end position="473"/>
    </location>
</feature>
<feature type="topological domain" description="Lumenal" evidence="2">
    <location>
        <begin position="474"/>
        <end position="485"/>
    </location>
</feature>
<feature type="transmembrane region" description="Helical" evidence="2">
    <location>
        <begin position="486"/>
        <end position="506"/>
    </location>
</feature>
<feature type="topological domain" description="Cytoplasmic" evidence="2">
    <location>
        <begin position="507"/>
        <end position="579"/>
    </location>
</feature>
<feature type="transmembrane region" description="Helical" evidence="2">
    <location>
        <begin position="580"/>
        <end position="600"/>
    </location>
</feature>
<feature type="topological domain" description="Lumenal" evidence="2">
    <location>
        <begin position="601"/>
        <end position="642"/>
    </location>
</feature>
<feature type="transmembrane region" description="Helical" evidence="2">
    <location>
        <begin position="643"/>
        <end position="663"/>
    </location>
</feature>
<feature type="topological domain" description="Cytoplasmic" evidence="2">
    <location>
        <begin position="664"/>
        <end position="813"/>
    </location>
</feature>
<feature type="repeat" description="ANK 1">
    <location>
        <begin position="133"/>
        <end position="162"/>
    </location>
</feature>
<feature type="repeat" description="ANK 2">
    <location>
        <begin position="167"/>
        <end position="196"/>
    </location>
</feature>
<feature type="repeat" description="ANK 3">
    <location>
        <begin position="201"/>
        <end position="231"/>
    </location>
</feature>
<feature type="repeat" description="ANK 4">
    <location>
        <begin position="235"/>
        <end position="264"/>
    </location>
</feature>
<feature type="repeat" description="ANK 5">
    <location>
        <begin position="276"/>
        <end position="305"/>
    </location>
</feature>
<feature type="repeat" description="ANK 6">
    <location>
        <begin position="309"/>
        <end position="338"/>
    </location>
</feature>
<feature type="domain" description="DHHC" evidence="3">
    <location>
        <begin position="536"/>
        <end position="586"/>
    </location>
</feature>
<feature type="region of interest" description="Disordered" evidence="4">
    <location>
        <begin position="1"/>
        <end position="83"/>
    </location>
</feature>
<feature type="compositionally biased region" description="Low complexity" evidence="4">
    <location>
        <begin position="9"/>
        <end position="24"/>
    </location>
</feature>
<feature type="compositionally biased region" description="Polar residues" evidence="4">
    <location>
        <begin position="28"/>
        <end position="46"/>
    </location>
</feature>
<feature type="compositionally biased region" description="Low complexity" evidence="4">
    <location>
        <begin position="47"/>
        <end position="78"/>
    </location>
</feature>
<feature type="active site" description="S-palmitoyl cysteine intermediate" evidence="1">
    <location>
        <position position="566"/>
    </location>
</feature>
<keyword id="KW-0012">Acyltransferase</keyword>
<keyword id="KW-0040">ANK repeat</keyword>
<keyword id="KW-0967">Endosome</keyword>
<keyword id="KW-0333">Golgi apparatus</keyword>
<keyword id="KW-0449">Lipoprotein</keyword>
<keyword id="KW-0472">Membrane</keyword>
<keyword id="KW-0564">Palmitate</keyword>
<keyword id="KW-1185">Reference proteome</keyword>
<keyword id="KW-0677">Repeat</keyword>
<keyword id="KW-0808">Transferase</keyword>
<keyword id="KW-0812">Transmembrane</keyword>
<keyword id="KW-1133">Transmembrane helix</keyword>
<accession>Q5AL27</accession>
<accession>A0A1D8PFK8</accession>
<sequence length="813" mass="91741">MAKKKSKSKSSSPKPKVSSTAAKPVEIDNQQNIENVQDSPSALQQQSATAEESENTATTATPSEGTTATTESSPVTTSNETDPIELSVLDNADHAIDSNSIKSTEAVLETLDSELNTIADTKTEPPTEQELNPTLAKYMRSCQEGNLTIVKELISSGQVLVNDTFSDEITGLHWACINNRLSLVKFLIANGANPNQLGGELKASPLHWACRNGLVYIVDYLMRNSDADPNLRDAQTYNALHLAVHSSNIMLVIYLLLSCCSTDSVKKVYIDEPDGSNRTALHWASYQNDIFTINALLRFGADVSKVDNSLFIPLHWAFMKGYKSVLKALVEAGSDIYFKNDQNKNSFDIAKDMNCSNTWEKVLIETGRDPKNNWAPLKPWVSAKLGKIITFLTPYFLLPLSFNVLSMGGDQGGFIIPKLILAIGILGGGIYLLNKLIISQYIFDDKKLAKSPILAGVFSATAFWSVLVWLYNILPTTFIHNFFANVIMAILIAIFTWSFFKAMFINPGFVPTPADNNVILSQVAQLIELGKFDTDHFCVNSFVRKPLRSRYSKHNKRLIARFDHSCPWVYNDIGVRNHKIFITFVYSLNMAIFVFLYLSLQYFDKVKDQYDSDDEGEGEGFVCSILGDDMCYGYKNHHFHFNVFMWDLFQCVWVSFLCIVQTFQILKGLTTWEFSSLNKQLQTNRFNHSTVPRDFEAGEGISLDQTQPSDGQHRHNHNEFQTCMNLLGIDQFILTLKMSLKSLFSNTRHGNNNTNYDPLTSLHIPTDHGIKQNWLDFWIIGEEKWRNVFYLPIDGENNLNGKVVDYYTLYSYH</sequence>
<protein>
    <recommendedName>
        <fullName>Palmitoyltransferase AKR1</fullName>
        <ecNumber>2.3.1.225</ecNumber>
    </recommendedName>
    <alternativeName>
        <fullName>Ankyrin repeat-containing protein AKR1</fullName>
    </alternativeName>
</protein>
<organism>
    <name type="scientific">Candida albicans (strain SC5314 / ATCC MYA-2876)</name>
    <name type="common">Yeast</name>
    <dbReference type="NCBI Taxonomy" id="237561"/>
    <lineage>
        <taxon>Eukaryota</taxon>
        <taxon>Fungi</taxon>
        <taxon>Dikarya</taxon>
        <taxon>Ascomycota</taxon>
        <taxon>Saccharomycotina</taxon>
        <taxon>Pichiomycetes</taxon>
        <taxon>Debaryomycetaceae</taxon>
        <taxon>Candida/Lodderomyces clade</taxon>
        <taxon>Candida</taxon>
    </lineage>
</organism>
<reference key="1">
    <citation type="journal article" date="2004" name="Proc. Natl. Acad. Sci. U.S.A.">
        <title>The diploid genome sequence of Candida albicans.</title>
        <authorList>
            <person name="Jones T."/>
            <person name="Federspiel N.A."/>
            <person name="Chibana H."/>
            <person name="Dungan J."/>
            <person name="Kalman S."/>
            <person name="Magee B.B."/>
            <person name="Newport G."/>
            <person name="Thorstenson Y.R."/>
            <person name="Agabian N."/>
            <person name="Magee P.T."/>
            <person name="Davis R.W."/>
            <person name="Scherer S."/>
        </authorList>
    </citation>
    <scope>NUCLEOTIDE SEQUENCE [LARGE SCALE GENOMIC DNA]</scope>
    <source>
        <strain>SC5314 / ATCC MYA-2876</strain>
    </source>
</reference>
<reference key="2">
    <citation type="journal article" date="2007" name="Genome Biol.">
        <title>Assembly of the Candida albicans genome into sixteen supercontigs aligned on the eight chromosomes.</title>
        <authorList>
            <person name="van het Hoog M."/>
            <person name="Rast T.J."/>
            <person name="Martchenko M."/>
            <person name="Grindle S."/>
            <person name="Dignard D."/>
            <person name="Hogues H."/>
            <person name="Cuomo C."/>
            <person name="Berriman M."/>
            <person name="Scherer S."/>
            <person name="Magee B.B."/>
            <person name="Whiteway M."/>
            <person name="Chibana H."/>
            <person name="Nantel A."/>
            <person name="Magee P.T."/>
        </authorList>
    </citation>
    <scope>GENOME REANNOTATION</scope>
    <source>
        <strain>SC5314 / ATCC MYA-2876</strain>
    </source>
</reference>
<reference key="3">
    <citation type="journal article" date="2013" name="Genome Biol.">
        <title>Assembly of a phased diploid Candida albicans genome facilitates allele-specific measurements and provides a simple model for repeat and indel structure.</title>
        <authorList>
            <person name="Muzzey D."/>
            <person name="Schwartz K."/>
            <person name="Weissman J.S."/>
            <person name="Sherlock G."/>
        </authorList>
    </citation>
    <scope>NUCLEOTIDE SEQUENCE [LARGE SCALE GENOMIC DNA]</scope>
    <scope>GENOME REANNOTATION</scope>
    <source>
        <strain>SC5314 / ATCC MYA-2876</strain>
    </source>
</reference>
<proteinExistence type="inferred from homology"/>